<protein>
    <recommendedName>
        <fullName>Tobamovirus multiplication protein 3</fullName>
        <shortName>NtTOM3</shortName>
    </recommendedName>
</protein>
<gene>
    <name type="primary">TOM3</name>
</gene>
<comment type="function">
    <text evidence="4">Necessary for the efficient intracellular multiplication of tobamoviruses, probably being a membrane anchor promoting the formation of the replication complex.</text>
</comment>
<comment type="subcellular location">
    <subcellularLocation>
        <location evidence="1">Vacuole membrane</location>
        <topology evidence="1">Multi-pass membrane protein</topology>
    </subcellularLocation>
</comment>
<comment type="disruption phenotype">
    <text evidence="4">Reduced efficiency of intracellular multiplication of tobamoviruses (e.g. TMV-L, ToMV, PMMoV, and TMGMV), characterized by a reduced accumulation of viral coat protein (CP) and reduced amplification of TMV-related RNAs.</text>
</comment>
<comment type="biotechnology">
    <text evidence="4">TOM3 inhibition via RNA interference constitutes a useful method for generating tobamovirus-resistant plants.</text>
</comment>
<comment type="similarity">
    <text evidence="5">Belongs to the plant tobamovirus multiplication TOM1 protein family.</text>
</comment>
<reference key="1">
    <citation type="journal article" date="2005" name="FEBS Lett.">
        <title>Tobamovirus-resistant tobacco generated by RNA interference directed against host genes.</title>
        <authorList>
            <person name="Asano M."/>
            <person name="Satoh R."/>
            <person name="Mochizuki A."/>
            <person name="Tsuda S."/>
            <person name="Yamanaka T."/>
            <person name="Nishiguchi M."/>
            <person name="Hirai K."/>
            <person name="Meshi T."/>
            <person name="Naito S."/>
            <person name="Ishikawa M."/>
        </authorList>
    </citation>
    <scope>NUCLEOTIDE SEQUENCE [MRNA]</scope>
    <scope>FUNCTION</scope>
    <scope>DISRUPTION PHENOTYPE</scope>
    <scope>BIOTECHNOLOGY</scope>
    <source>
        <strain>cv. Samsun</strain>
    </source>
</reference>
<name>TOM3_TOBAC</name>
<evidence type="ECO:0000250" key="1"/>
<evidence type="ECO:0000255" key="2"/>
<evidence type="ECO:0000255" key="3">
    <source>
        <dbReference type="PROSITE-ProRule" id="PRU00498"/>
    </source>
</evidence>
<evidence type="ECO:0000269" key="4">
    <source>
    </source>
</evidence>
<evidence type="ECO:0000305" key="5"/>
<feature type="chain" id="PRO_0000423673" description="Tobamovirus multiplication protein 3">
    <location>
        <begin position="1"/>
        <end position="294"/>
    </location>
</feature>
<feature type="topological domain" description="Extracellular" evidence="2">
    <location>
        <begin position="1"/>
        <end position="39"/>
    </location>
</feature>
<feature type="transmembrane region" description="Helical" evidence="2">
    <location>
        <begin position="40"/>
        <end position="60"/>
    </location>
</feature>
<feature type="topological domain" description="Cytoplasmic" evidence="2">
    <location>
        <begin position="61"/>
        <end position="75"/>
    </location>
</feature>
<feature type="transmembrane region" description="Helical" evidence="2">
    <location>
        <begin position="76"/>
        <end position="94"/>
    </location>
</feature>
<feature type="topological domain" description="Extracellular" evidence="2">
    <location>
        <begin position="95"/>
        <end position="108"/>
    </location>
</feature>
<feature type="transmembrane region" description="Helical" evidence="2">
    <location>
        <begin position="109"/>
        <end position="129"/>
    </location>
</feature>
<feature type="topological domain" description="Cytoplasmic" evidence="2">
    <location>
        <begin position="130"/>
        <end position="147"/>
    </location>
</feature>
<feature type="transmembrane region" description="Helical" evidence="2">
    <location>
        <begin position="148"/>
        <end position="168"/>
    </location>
</feature>
<feature type="topological domain" description="Extracellular" evidence="2">
    <location>
        <begin position="169"/>
        <end position="172"/>
    </location>
</feature>
<feature type="transmembrane region" description="Helical" evidence="2">
    <location>
        <begin position="173"/>
        <end position="193"/>
    </location>
</feature>
<feature type="topological domain" description="Cytoplasmic" evidence="2">
    <location>
        <begin position="194"/>
        <end position="220"/>
    </location>
</feature>
<feature type="transmembrane region" description="Helical" evidence="2">
    <location>
        <begin position="221"/>
        <end position="241"/>
    </location>
</feature>
<feature type="topological domain" description="Extracellular" evidence="2">
    <location>
        <begin position="242"/>
        <end position="256"/>
    </location>
</feature>
<feature type="transmembrane region" description="Helical" evidence="2">
    <location>
        <begin position="257"/>
        <end position="277"/>
    </location>
</feature>
<feature type="topological domain" description="Cytoplasmic" evidence="2">
    <location>
        <begin position="278"/>
        <end position="294"/>
    </location>
</feature>
<feature type="glycosylation site" description="N-linked (GlcNAc...) asparagine" evidence="3">
    <location>
        <position position="31"/>
    </location>
</feature>
<dbReference type="EMBL" id="AB193040">
    <property type="protein sequence ID" value="BAE43837.1"/>
    <property type="molecule type" value="mRNA"/>
</dbReference>
<dbReference type="RefSeq" id="NP_001311968.1">
    <property type="nucleotide sequence ID" value="NM_001325039.1"/>
</dbReference>
<dbReference type="SMR" id="Q402F3"/>
<dbReference type="STRING" id="4097.Q402F3"/>
<dbReference type="GlyCosmos" id="Q402F3">
    <property type="glycosylation" value="1 site, No reported glycans"/>
</dbReference>
<dbReference type="PaxDb" id="4097-Q402F3"/>
<dbReference type="GeneID" id="107769903"/>
<dbReference type="KEGG" id="nta:107769903"/>
<dbReference type="OrthoDB" id="19798at2759"/>
<dbReference type="Proteomes" id="UP000084051">
    <property type="component" value="Unplaced"/>
</dbReference>
<dbReference type="GO" id="GO:0009705">
    <property type="term" value="C:plant-type vacuole membrane"/>
    <property type="evidence" value="ECO:0000250"/>
    <property type="project" value="UniProtKB"/>
</dbReference>
<dbReference type="GO" id="GO:0046786">
    <property type="term" value="P:viral replication complex formation and maintenance"/>
    <property type="evidence" value="ECO:0000315"/>
    <property type="project" value="UniProtKB"/>
</dbReference>
<dbReference type="InterPro" id="IPR040226">
    <property type="entry name" value="THH1/TOM1/TOM3"/>
</dbReference>
<dbReference type="InterPro" id="IPR009457">
    <property type="entry name" value="THH1/TOM1/TOM3_dom"/>
</dbReference>
<dbReference type="PANTHER" id="PTHR31142:SF3">
    <property type="entry name" value="THH1_TOM1_TOM3 DOMAIN-CONTAINING PROTEIN"/>
    <property type="match status" value="1"/>
</dbReference>
<dbReference type="PANTHER" id="PTHR31142">
    <property type="entry name" value="TOBAMOVIRUS MULTIPLICATION PROTEIN 1-LIKE ISOFORM X1"/>
    <property type="match status" value="1"/>
</dbReference>
<dbReference type="Pfam" id="PF06454">
    <property type="entry name" value="THH1_TOM1-3_dom"/>
    <property type="match status" value="1"/>
</dbReference>
<proteinExistence type="evidence at protein level"/>
<sequence length="294" mass="34023">MGRAEMVVGPSAAAAAYHLKNEAISWWEEVNRSRAWQDRLFHVLAILYGIVSAVALVQLIRIQMRVPEYGWTTQKVFHFLNFLVNGVRSLVFAFRRDVQKLHPEIVQHILLDMPSLAFFTTYALLVLFWAEIYYQARAVSTDGLRPSFFTINGVVYVIQIILWLIIWWKPVRVLVILSKMFFAGVSLFAALGFLLYGGRLFLMLQRFPVESKGRRKKLQEVGYVTTICFSCFLIRCVMMCFNAFNKAADLDVLDHPILNLIYYLLVEILPSSLVLFILRKLPPKRGITQYHPIR</sequence>
<organism>
    <name type="scientific">Nicotiana tabacum</name>
    <name type="common">Common tobacco</name>
    <dbReference type="NCBI Taxonomy" id="4097"/>
    <lineage>
        <taxon>Eukaryota</taxon>
        <taxon>Viridiplantae</taxon>
        <taxon>Streptophyta</taxon>
        <taxon>Embryophyta</taxon>
        <taxon>Tracheophyta</taxon>
        <taxon>Spermatophyta</taxon>
        <taxon>Magnoliopsida</taxon>
        <taxon>eudicotyledons</taxon>
        <taxon>Gunneridae</taxon>
        <taxon>Pentapetalae</taxon>
        <taxon>asterids</taxon>
        <taxon>lamiids</taxon>
        <taxon>Solanales</taxon>
        <taxon>Solanaceae</taxon>
        <taxon>Nicotianoideae</taxon>
        <taxon>Nicotianeae</taxon>
        <taxon>Nicotiana</taxon>
    </lineage>
</organism>
<accession>Q402F3</accession>
<keyword id="KW-0325">Glycoprotein</keyword>
<keyword id="KW-0472">Membrane</keyword>
<keyword id="KW-1185">Reference proteome</keyword>
<keyword id="KW-0812">Transmembrane</keyword>
<keyword id="KW-1133">Transmembrane helix</keyword>
<keyword id="KW-0926">Vacuole</keyword>